<name>WTX1A_NEOAP</name>
<dbReference type="GO" id="GO:0005576">
    <property type="term" value="C:extracellular region"/>
    <property type="evidence" value="ECO:0007669"/>
    <property type="project" value="UniProtKB-SubCell"/>
</dbReference>
<dbReference type="GO" id="GO:0016020">
    <property type="term" value="C:membrane"/>
    <property type="evidence" value="ECO:0007669"/>
    <property type="project" value="UniProtKB-KW"/>
</dbReference>
<dbReference type="GO" id="GO:0044218">
    <property type="term" value="C:other organism cell membrane"/>
    <property type="evidence" value="ECO:0007669"/>
    <property type="project" value="UniProtKB-KW"/>
</dbReference>
<dbReference type="GO" id="GO:0090729">
    <property type="term" value="F:toxin activity"/>
    <property type="evidence" value="ECO:0007669"/>
    <property type="project" value="UniProtKB-KW"/>
</dbReference>
<dbReference type="GO" id="GO:0042742">
    <property type="term" value="P:defense response to bacterium"/>
    <property type="evidence" value="ECO:0007669"/>
    <property type="project" value="UniProtKB-KW"/>
</dbReference>
<dbReference type="GO" id="GO:0050832">
    <property type="term" value="P:defense response to fungus"/>
    <property type="evidence" value="ECO:0007669"/>
    <property type="project" value="UniProtKB-KW"/>
</dbReference>
<dbReference type="GO" id="GO:0031640">
    <property type="term" value="P:killing of cells of another organism"/>
    <property type="evidence" value="ECO:0007669"/>
    <property type="project" value="UniProtKB-KW"/>
</dbReference>
<dbReference type="InterPro" id="IPR012523">
    <property type="entry name" value="Antimicrobial_4"/>
</dbReference>
<dbReference type="Pfam" id="PF08024">
    <property type="entry name" value="Antimicrobial_4"/>
    <property type="match status" value="1"/>
</dbReference>
<comment type="function">
    <text evidence="1">Has a broad spectrum of activity against both Gram-positive and Gram-negative bacteria and S.cerevisiae. Has insecticidal and hemolytic activities. May act by disrupting the integrity of the bacterial cell membrane.</text>
</comment>
<comment type="subcellular location">
    <subcellularLocation>
        <location evidence="5">Secreted</location>
    </subcellularLocation>
    <subcellularLocation>
        <location evidence="4">Target cell membrane</location>
    </subcellularLocation>
</comment>
<comment type="tissue specificity">
    <text evidence="5">Expressed by the venom gland.</text>
</comment>
<comment type="similarity">
    <text evidence="4">Belongs to the non-disulfide-bridged peptide (NDBP) superfamily. Medium-length antimicrobial peptide (group 3) family. Ponericin-W subfamily.</text>
</comment>
<keyword id="KW-0044">Antibiotic</keyword>
<keyword id="KW-0929">Antimicrobial</keyword>
<keyword id="KW-0903">Direct protein sequencing</keyword>
<keyword id="KW-0295">Fungicide</keyword>
<keyword id="KW-0472">Membrane</keyword>
<keyword id="KW-0964">Secreted</keyword>
<keyword id="KW-1052">Target cell membrane</keyword>
<keyword id="KW-1053">Target membrane</keyword>
<keyword id="KW-0800">Toxin</keyword>
<proteinExistence type="evidence at protein level"/>
<feature type="peptide" id="PRO_0000447117" description="U1-poneritoxin-Na1a" evidence="5">
    <location>
        <begin position="1"/>
        <end position="24"/>
    </location>
</feature>
<organism>
    <name type="scientific">Neoponera apicalis</name>
    <name type="common">Ant</name>
    <name type="synonym">Pachycondyla apicalis</name>
    <dbReference type="NCBI Taxonomy" id="2320211"/>
    <lineage>
        <taxon>Eukaryota</taxon>
        <taxon>Metazoa</taxon>
        <taxon>Ecdysozoa</taxon>
        <taxon>Arthropoda</taxon>
        <taxon>Hexapoda</taxon>
        <taxon>Insecta</taxon>
        <taxon>Pterygota</taxon>
        <taxon>Neoptera</taxon>
        <taxon>Endopterygota</taxon>
        <taxon>Hymenoptera</taxon>
        <taxon>Apocrita</taxon>
        <taxon>Aculeata</taxon>
        <taxon>Formicoidea</taxon>
        <taxon>Formicidae</taxon>
        <taxon>Ponerinae</taxon>
        <taxon>Ponerini</taxon>
        <taxon>Neoponera</taxon>
    </lineage>
</organism>
<sequence length="24" mass="2587">FLGGLMKIGAKLLPSVIGLFKKKQ</sequence>
<evidence type="ECO:0000250" key="1">
    <source>
        <dbReference type="UniProtKB" id="P82423"/>
    </source>
</evidence>
<evidence type="ECO:0000303" key="2">
    <source>
    </source>
</evidence>
<evidence type="ECO:0000303" key="3">
    <source>
    </source>
</evidence>
<evidence type="ECO:0000305" key="4"/>
<evidence type="ECO:0000305" key="5">
    <source>
    </source>
</evidence>
<reference key="1">
    <citation type="journal article" date="2014" name="Toxicon">
        <title>Diversity of peptide toxins from stinging ant venoms.</title>
        <authorList>
            <person name="Aili S.R."/>
            <person name="Touchard A."/>
            <person name="Escoubas P."/>
            <person name="Padula M.P."/>
            <person name="Orivel J."/>
            <person name="Dejean A."/>
            <person name="Nicholson G.M."/>
        </authorList>
    </citation>
    <scope>REVIEW</scope>
    <scope>PROTEIN SEQUENCE</scope>
</reference>
<reference key="2">
    <citation type="journal article" date="2016" name="Toxins">
        <title>The biochemical toxin arsenal from ant venoms.</title>
        <authorList>
            <person name="Touchard A."/>
            <person name="Aili S.R."/>
            <person name="Fox E.G."/>
            <person name="Escoubas P."/>
            <person name="Orivel J."/>
            <person name="Nicholson G.M."/>
            <person name="Dejean A."/>
        </authorList>
    </citation>
    <scope>REVIEW</scope>
    <scope>NOMENCLATURE</scope>
</reference>
<protein>
    <recommendedName>
        <fullName evidence="3">U1-poneritoxin-Na1a</fullName>
        <shortName evidence="3">U1-PONTX-Na1a</shortName>
    </recommendedName>
    <alternativeName>
        <fullName evidence="4">Poneratoxin</fullName>
    </alternativeName>
    <alternativeName>
        <fullName evidence="2">Ponericin Pa II1</fullName>
    </alternativeName>
</protein>
<accession>P0DSM2</accession>